<sequence length="98" mass="11213">MFEQRVNSDVLTVSTVNSQDQVTQKPLRDSVKQALKNYFAQLNGQDVSDLYELVLAEVEQPLLDMVMQYTRGNQTRAALMMGINRGTLRKKLKKYGMN</sequence>
<protein>
    <recommendedName>
        <fullName evidence="1">DNA-binding protein Fis</fullName>
    </recommendedName>
</protein>
<name>FIS_ENT38</name>
<accession>A4WF77</accession>
<keyword id="KW-0010">Activator</keyword>
<keyword id="KW-0238">DNA-binding</keyword>
<keyword id="KW-0804">Transcription</keyword>
<keyword id="KW-0805">Transcription regulation</keyword>
<feature type="chain" id="PRO_1000058262" description="DNA-binding protein Fis">
    <location>
        <begin position="1"/>
        <end position="98"/>
    </location>
</feature>
<feature type="DNA-binding region" description="H-T-H motif" evidence="1">
    <location>
        <begin position="74"/>
        <end position="93"/>
    </location>
</feature>
<evidence type="ECO:0000255" key="1">
    <source>
        <dbReference type="HAMAP-Rule" id="MF_00166"/>
    </source>
</evidence>
<comment type="function">
    <text evidence="1">Activates ribosomal RNA transcription. Plays a direct role in upstream activation of rRNA promoters.</text>
</comment>
<comment type="subunit">
    <text evidence="1">Homodimer.</text>
</comment>
<comment type="similarity">
    <text evidence="1">Belongs to the transcriptional regulatory Fis family.</text>
</comment>
<gene>
    <name evidence="1" type="primary">fis</name>
    <name type="ordered locus">Ent638_3700</name>
</gene>
<organism>
    <name type="scientific">Enterobacter sp. (strain 638)</name>
    <dbReference type="NCBI Taxonomy" id="399742"/>
    <lineage>
        <taxon>Bacteria</taxon>
        <taxon>Pseudomonadati</taxon>
        <taxon>Pseudomonadota</taxon>
        <taxon>Gammaproteobacteria</taxon>
        <taxon>Enterobacterales</taxon>
        <taxon>Enterobacteriaceae</taxon>
        <taxon>Enterobacter</taxon>
    </lineage>
</organism>
<proteinExistence type="inferred from homology"/>
<reference key="1">
    <citation type="journal article" date="2010" name="PLoS Genet.">
        <title>Genome sequence of the plant growth promoting endophytic bacterium Enterobacter sp. 638.</title>
        <authorList>
            <person name="Taghavi S."/>
            <person name="van der Lelie D."/>
            <person name="Hoffman A."/>
            <person name="Zhang Y.B."/>
            <person name="Walla M.D."/>
            <person name="Vangronsveld J."/>
            <person name="Newman L."/>
            <person name="Monchy S."/>
        </authorList>
    </citation>
    <scope>NUCLEOTIDE SEQUENCE [LARGE SCALE GENOMIC DNA]</scope>
    <source>
        <strain>638</strain>
    </source>
</reference>
<dbReference type="EMBL" id="CP000653">
    <property type="protein sequence ID" value="ABP62357.1"/>
    <property type="molecule type" value="Genomic_DNA"/>
</dbReference>
<dbReference type="RefSeq" id="WP_003855228.1">
    <property type="nucleotide sequence ID" value="NC_009436.1"/>
</dbReference>
<dbReference type="SMR" id="A4WF77"/>
<dbReference type="STRING" id="399742.Ent638_3700"/>
<dbReference type="GeneID" id="97187097"/>
<dbReference type="KEGG" id="ent:Ent638_3700"/>
<dbReference type="eggNOG" id="COG2901">
    <property type="taxonomic scope" value="Bacteria"/>
</dbReference>
<dbReference type="HOGENOM" id="CLU_158040_3_0_6"/>
<dbReference type="OrthoDB" id="9802388at2"/>
<dbReference type="Proteomes" id="UP000000230">
    <property type="component" value="Chromosome"/>
</dbReference>
<dbReference type="GO" id="GO:0003700">
    <property type="term" value="F:DNA-binding transcription factor activity"/>
    <property type="evidence" value="ECO:0007669"/>
    <property type="project" value="UniProtKB-UniRule"/>
</dbReference>
<dbReference type="GO" id="GO:0043565">
    <property type="term" value="F:sequence-specific DNA binding"/>
    <property type="evidence" value="ECO:0007669"/>
    <property type="project" value="InterPro"/>
</dbReference>
<dbReference type="FunFam" id="1.10.10.60:FF:000006">
    <property type="entry name" value="DNA-binding protein Fis"/>
    <property type="match status" value="1"/>
</dbReference>
<dbReference type="Gene3D" id="1.10.10.60">
    <property type="entry name" value="Homeodomain-like"/>
    <property type="match status" value="1"/>
</dbReference>
<dbReference type="HAMAP" id="MF_00166">
    <property type="entry name" value="DNA_binding_Fis"/>
    <property type="match status" value="1"/>
</dbReference>
<dbReference type="InterPro" id="IPR005412">
    <property type="entry name" value="Fis_DNA-bd"/>
</dbReference>
<dbReference type="InterPro" id="IPR009057">
    <property type="entry name" value="Homeodomain-like_sf"/>
</dbReference>
<dbReference type="InterPro" id="IPR002197">
    <property type="entry name" value="HTH_Fis"/>
</dbReference>
<dbReference type="InterPro" id="IPR050207">
    <property type="entry name" value="Trans_regulatory_Fis"/>
</dbReference>
<dbReference type="NCBIfam" id="NF001659">
    <property type="entry name" value="PRK00430.1"/>
    <property type="match status" value="1"/>
</dbReference>
<dbReference type="PANTHER" id="PTHR47918">
    <property type="entry name" value="DNA-BINDING PROTEIN FIS"/>
    <property type="match status" value="1"/>
</dbReference>
<dbReference type="PANTHER" id="PTHR47918:SF1">
    <property type="entry name" value="DNA-BINDING PROTEIN FIS"/>
    <property type="match status" value="1"/>
</dbReference>
<dbReference type="Pfam" id="PF02954">
    <property type="entry name" value="HTH_8"/>
    <property type="match status" value="1"/>
</dbReference>
<dbReference type="PIRSF" id="PIRSF002097">
    <property type="entry name" value="DNA-binding_Fis"/>
    <property type="match status" value="1"/>
</dbReference>
<dbReference type="PRINTS" id="PR01591">
    <property type="entry name" value="DNABINDNGFIS"/>
</dbReference>
<dbReference type="PRINTS" id="PR01590">
    <property type="entry name" value="HTHFIS"/>
</dbReference>
<dbReference type="SUPFAM" id="SSF46689">
    <property type="entry name" value="Homeodomain-like"/>
    <property type="match status" value="1"/>
</dbReference>